<feature type="chain" id="PRO_0000353638" description="NAD(P)H-quinone oxidoreductase subunit O">
    <location>
        <begin position="1"/>
        <end position="86"/>
    </location>
</feature>
<dbReference type="EC" id="7.1.1.-" evidence="1"/>
<dbReference type="EMBL" id="AE017126">
    <property type="protein sequence ID" value="AAP99187.1"/>
    <property type="molecule type" value="Genomic_DNA"/>
</dbReference>
<dbReference type="RefSeq" id="NP_874535.1">
    <property type="nucleotide sequence ID" value="NC_005042.1"/>
</dbReference>
<dbReference type="RefSeq" id="WP_011124296.1">
    <property type="nucleotide sequence ID" value="NC_005042.1"/>
</dbReference>
<dbReference type="SMR" id="Q7VE72"/>
<dbReference type="STRING" id="167539.Pro_0141"/>
<dbReference type="EnsemblBacteria" id="AAP99187">
    <property type="protein sequence ID" value="AAP99187"/>
    <property type="gene ID" value="Pro_0141"/>
</dbReference>
<dbReference type="KEGG" id="pma:Pro_0141"/>
<dbReference type="PATRIC" id="fig|167539.5.peg.147"/>
<dbReference type="eggNOG" id="ENOG50345U2">
    <property type="taxonomic scope" value="Bacteria"/>
</dbReference>
<dbReference type="HOGENOM" id="CLU_195299_0_0_3"/>
<dbReference type="OrthoDB" id="426633at2"/>
<dbReference type="Proteomes" id="UP000001420">
    <property type="component" value="Chromosome"/>
</dbReference>
<dbReference type="GO" id="GO:0031676">
    <property type="term" value="C:plasma membrane-derived thylakoid membrane"/>
    <property type="evidence" value="ECO:0007669"/>
    <property type="project" value="UniProtKB-SubCell"/>
</dbReference>
<dbReference type="GO" id="GO:0016655">
    <property type="term" value="F:oxidoreductase activity, acting on NAD(P)H, quinone or similar compound as acceptor"/>
    <property type="evidence" value="ECO:0007669"/>
    <property type="project" value="UniProtKB-UniRule"/>
</dbReference>
<dbReference type="GO" id="GO:0048038">
    <property type="term" value="F:quinone binding"/>
    <property type="evidence" value="ECO:0007669"/>
    <property type="project" value="UniProtKB-KW"/>
</dbReference>
<dbReference type="HAMAP" id="MF_01354">
    <property type="entry name" value="NDH1_NDH1O"/>
    <property type="match status" value="1"/>
</dbReference>
<dbReference type="InterPro" id="IPR020905">
    <property type="entry name" value="NdhO"/>
</dbReference>
<dbReference type="Pfam" id="PF11910">
    <property type="entry name" value="NdhO"/>
    <property type="match status" value="1"/>
</dbReference>
<evidence type="ECO:0000255" key="1">
    <source>
        <dbReference type="HAMAP-Rule" id="MF_01354"/>
    </source>
</evidence>
<organism>
    <name type="scientific">Prochlorococcus marinus (strain SARG / CCMP1375 / SS120)</name>
    <dbReference type="NCBI Taxonomy" id="167539"/>
    <lineage>
        <taxon>Bacteria</taxon>
        <taxon>Bacillati</taxon>
        <taxon>Cyanobacteriota</taxon>
        <taxon>Cyanophyceae</taxon>
        <taxon>Synechococcales</taxon>
        <taxon>Prochlorococcaceae</taxon>
        <taxon>Prochlorococcus</taxon>
    </lineage>
</organism>
<protein>
    <recommendedName>
        <fullName evidence="1">NAD(P)H-quinone oxidoreductase subunit O</fullName>
        <ecNumber evidence="1">7.1.1.-</ecNumber>
    </recommendedName>
    <alternativeName>
        <fullName evidence="1">NAD(P)H dehydrogenase I subunit O</fullName>
    </alternativeName>
    <alternativeName>
        <fullName>NDH-1 subunit O</fullName>
    </alternativeName>
    <alternativeName>
        <fullName>NDH-O</fullName>
    </alternativeName>
</protein>
<gene>
    <name evidence="1" type="primary">ndhO</name>
    <name type="ordered locus">Pro_0141</name>
</gene>
<comment type="function">
    <text evidence="1">NDH-1 shuttles electrons from an unknown electron donor, via FMN and iron-sulfur (Fe-S) centers, to quinones in the respiratory and/or the photosynthetic chain. The immediate electron acceptor for the enzyme in this species is believed to be plastoquinone. Couples the redox reaction to proton translocation, and thus conserves the redox energy in a proton gradient. Cyanobacterial NDH-1 also plays a role in inorganic carbon-concentration.</text>
</comment>
<comment type="catalytic activity">
    <reaction evidence="1">
        <text>a plastoquinone + NADH + (n+1) H(+)(in) = a plastoquinol + NAD(+) + n H(+)(out)</text>
        <dbReference type="Rhea" id="RHEA:42608"/>
        <dbReference type="Rhea" id="RHEA-COMP:9561"/>
        <dbReference type="Rhea" id="RHEA-COMP:9562"/>
        <dbReference type="ChEBI" id="CHEBI:15378"/>
        <dbReference type="ChEBI" id="CHEBI:17757"/>
        <dbReference type="ChEBI" id="CHEBI:57540"/>
        <dbReference type="ChEBI" id="CHEBI:57945"/>
        <dbReference type="ChEBI" id="CHEBI:62192"/>
    </reaction>
</comment>
<comment type="catalytic activity">
    <reaction evidence="1">
        <text>a plastoquinone + NADPH + (n+1) H(+)(in) = a plastoquinol + NADP(+) + n H(+)(out)</text>
        <dbReference type="Rhea" id="RHEA:42612"/>
        <dbReference type="Rhea" id="RHEA-COMP:9561"/>
        <dbReference type="Rhea" id="RHEA-COMP:9562"/>
        <dbReference type="ChEBI" id="CHEBI:15378"/>
        <dbReference type="ChEBI" id="CHEBI:17757"/>
        <dbReference type="ChEBI" id="CHEBI:57783"/>
        <dbReference type="ChEBI" id="CHEBI:58349"/>
        <dbReference type="ChEBI" id="CHEBI:62192"/>
    </reaction>
</comment>
<comment type="subunit">
    <text evidence="1">NDH-1 can be composed of about 15 different subunits; different subcomplexes with different compositions have been identified which probably have different functions.</text>
</comment>
<comment type="subcellular location">
    <subcellularLocation>
        <location evidence="1">Cellular thylakoid membrane</location>
        <topology evidence="1">Peripheral membrane protein</topology>
        <orientation evidence="1">Cytoplasmic side</orientation>
    </subcellularLocation>
</comment>
<comment type="similarity">
    <text evidence="1">Belongs to the complex I NdhO subunit family.</text>
</comment>
<sequence>MSVTPSPIETNAPKPLKKGSLVRVNPEAYKNSLESLASDQSSPEYIFEGPGELVAIKQDYGQVRWRRPVPDVWLRLDQLQAWTEGS</sequence>
<keyword id="KW-0472">Membrane</keyword>
<keyword id="KW-0520">NAD</keyword>
<keyword id="KW-0521">NADP</keyword>
<keyword id="KW-0618">Plastoquinone</keyword>
<keyword id="KW-0874">Quinone</keyword>
<keyword id="KW-1185">Reference proteome</keyword>
<keyword id="KW-0793">Thylakoid</keyword>
<keyword id="KW-1278">Translocase</keyword>
<keyword id="KW-0813">Transport</keyword>
<name>NDHO_PROMA</name>
<accession>Q7VE72</accession>
<reference key="1">
    <citation type="journal article" date="2003" name="Proc. Natl. Acad. Sci. U.S.A.">
        <title>Genome sequence of the cyanobacterium Prochlorococcus marinus SS120, a nearly minimal oxyphototrophic genome.</title>
        <authorList>
            <person name="Dufresne A."/>
            <person name="Salanoubat M."/>
            <person name="Partensky F."/>
            <person name="Artiguenave F."/>
            <person name="Axmann I.M."/>
            <person name="Barbe V."/>
            <person name="Duprat S."/>
            <person name="Galperin M.Y."/>
            <person name="Koonin E.V."/>
            <person name="Le Gall F."/>
            <person name="Makarova K.S."/>
            <person name="Ostrowski M."/>
            <person name="Oztas S."/>
            <person name="Robert C."/>
            <person name="Rogozin I.B."/>
            <person name="Scanlan D.J."/>
            <person name="Tandeau de Marsac N."/>
            <person name="Weissenbach J."/>
            <person name="Wincker P."/>
            <person name="Wolf Y.I."/>
            <person name="Hess W.R."/>
        </authorList>
    </citation>
    <scope>NUCLEOTIDE SEQUENCE [LARGE SCALE GENOMIC DNA]</scope>
    <source>
        <strain>SARG / CCMP1375 / SS120</strain>
    </source>
</reference>
<proteinExistence type="inferred from homology"/>